<proteinExistence type="inferred from homology"/>
<reference key="1">
    <citation type="submission" date="2007-10" db="EMBL/GenBank/DDBJ databases">
        <title>Complete sequence of Shewanella pealeana ATCC 700345.</title>
        <authorList>
            <consortium name="US DOE Joint Genome Institute"/>
            <person name="Copeland A."/>
            <person name="Lucas S."/>
            <person name="Lapidus A."/>
            <person name="Barry K."/>
            <person name="Glavina del Rio T."/>
            <person name="Dalin E."/>
            <person name="Tice H."/>
            <person name="Pitluck S."/>
            <person name="Chertkov O."/>
            <person name="Brettin T."/>
            <person name="Bruce D."/>
            <person name="Detter J.C."/>
            <person name="Han C."/>
            <person name="Schmutz J."/>
            <person name="Larimer F."/>
            <person name="Land M."/>
            <person name="Hauser L."/>
            <person name="Kyrpides N."/>
            <person name="Kim E."/>
            <person name="Zhao J.-S.Z."/>
            <person name="Manno D."/>
            <person name="Hawari J."/>
            <person name="Richardson P."/>
        </authorList>
    </citation>
    <scope>NUCLEOTIDE SEQUENCE [LARGE SCALE GENOMIC DNA]</scope>
    <source>
        <strain>ATCC 700345 / ANG-SQ1</strain>
    </source>
</reference>
<dbReference type="EMBL" id="CP000851">
    <property type="protein sequence ID" value="ABV85430.1"/>
    <property type="molecule type" value="Genomic_DNA"/>
</dbReference>
<dbReference type="RefSeq" id="WP_012153376.1">
    <property type="nucleotide sequence ID" value="NC_009901.1"/>
</dbReference>
<dbReference type="SMR" id="A8GYP3"/>
<dbReference type="STRING" id="398579.Spea_0101"/>
<dbReference type="KEGG" id="spl:Spea_0101"/>
<dbReference type="eggNOG" id="COG0218">
    <property type="taxonomic scope" value="Bacteria"/>
</dbReference>
<dbReference type="HOGENOM" id="CLU_033732_1_2_6"/>
<dbReference type="OrthoDB" id="9804921at2"/>
<dbReference type="Proteomes" id="UP000002608">
    <property type="component" value="Chromosome"/>
</dbReference>
<dbReference type="GO" id="GO:0005829">
    <property type="term" value="C:cytosol"/>
    <property type="evidence" value="ECO:0007669"/>
    <property type="project" value="TreeGrafter"/>
</dbReference>
<dbReference type="GO" id="GO:0005525">
    <property type="term" value="F:GTP binding"/>
    <property type="evidence" value="ECO:0007669"/>
    <property type="project" value="UniProtKB-UniRule"/>
</dbReference>
<dbReference type="GO" id="GO:0046872">
    <property type="term" value="F:metal ion binding"/>
    <property type="evidence" value="ECO:0007669"/>
    <property type="project" value="UniProtKB-KW"/>
</dbReference>
<dbReference type="GO" id="GO:0000917">
    <property type="term" value="P:division septum assembly"/>
    <property type="evidence" value="ECO:0007669"/>
    <property type="project" value="UniProtKB-KW"/>
</dbReference>
<dbReference type="CDD" id="cd01876">
    <property type="entry name" value="YihA_EngB"/>
    <property type="match status" value="1"/>
</dbReference>
<dbReference type="FunFam" id="3.40.50.300:FF:000098">
    <property type="entry name" value="Probable GTP-binding protein EngB"/>
    <property type="match status" value="1"/>
</dbReference>
<dbReference type="Gene3D" id="3.40.50.300">
    <property type="entry name" value="P-loop containing nucleotide triphosphate hydrolases"/>
    <property type="match status" value="1"/>
</dbReference>
<dbReference type="HAMAP" id="MF_00321">
    <property type="entry name" value="GTPase_EngB"/>
    <property type="match status" value="1"/>
</dbReference>
<dbReference type="InterPro" id="IPR030393">
    <property type="entry name" value="G_ENGB_dom"/>
</dbReference>
<dbReference type="InterPro" id="IPR006073">
    <property type="entry name" value="GTP-bd"/>
</dbReference>
<dbReference type="InterPro" id="IPR019987">
    <property type="entry name" value="GTP-bd_ribosome_bio_YsxC"/>
</dbReference>
<dbReference type="InterPro" id="IPR027417">
    <property type="entry name" value="P-loop_NTPase"/>
</dbReference>
<dbReference type="NCBIfam" id="TIGR03598">
    <property type="entry name" value="GTPase_YsxC"/>
    <property type="match status" value="1"/>
</dbReference>
<dbReference type="PANTHER" id="PTHR11649:SF13">
    <property type="entry name" value="ENGB-TYPE G DOMAIN-CONTAINING PROTEIN"/>
    <property type="match status" value="1"/>
</dbReference>
<dbReference type="PANTHER" id="PTHR11649">
    <property type="entry name" value="MSS1/TRME-RELATED GTP-BINDING PROTEIN"/>
    <property type="match status" value="1"/>
</dbReference>
<dbReference type="Pfam" id="PF01926">
    <property type="entry name" value="MMR_HSR1"/>
    <property type="match status" value="1"/>
</dbReference>
<dbReference type="SUPFAM" id="SSF52540">
    <property type="entry name" value="P-loop containing nucleoside triphosphate hydrolases"/>
    <property type="match status" value="1"/>
</dbReference>
<dbReference type="PROSITE" id="PS51706">
    <property type="entry name" value="G_ENGB"/>
    <property type="match status" value="1"/>
</dbReference>
<keyword id="KW-0131">Cell cycle</keyword>
<keyword id="KW-0132">Cell division</keyword>
<keyword id="KW-0342">GTP-binding</keyword>
<keyword id="KW-0460">Magnesium</keyword>
<keyword id="KW-0479">Metal-binding</keyword>
<keyword id="KW-0547">Nucleotide-binding</keyword>
<keyword id="KW-1185">Reference proteome</keyword>
<keyword id="KW-0717">Septation</keyword>
<name>ENGB_SHEPA</name>
<accession>A8GYP3</accession>
<feature type="chain" id="PRO_1000079183" description="Probable GTP-binding protein EngB">
    <location>
        <begin position="1"/>
        <end position="225"/>
    </location>
</feature>
<feature type="domain" description="EngB-type G" evidence="1">
    <location>
        <begin position="31"/>
        <end position="204"/>
    </location>
</feature>
<feature type="binding site" evidence="1">
    <location>
        <begin position="39"/>
        <end position="46"/>
    </location>
    <ligand>
        <name>GTP</name>
        <dbReference type="ChEBI" id="CHEBI:37565"/>
    </ligand>
</feature>
<feature type="binding site" evidence="1">
    <location>
        <position position="46"/>
    </location>
    <ligand>
        <name>Mg(2+)</name>
        <dbReference type="ChEBI" id="CHEBI:18420"/>
    </ligand>
</feature>
<feature type="binding site" evidence="1">
    <location>
        <begin position="65"/>
        <end position="69"/>
    </location>
    <ligand>
        <name>GTP</name>
        <dbReference type="ChEBI" id="CHEBI:37565"/>
    </ligand>
</feature>
<feature type="binding site" evidence="1">
    <location>
        <position position="67"/>
    </location>
    <ligand>
        <name>Mg(2+)</name>
        <dbReference type="ChEBI" id="CHEBI:18420"/>
    </ligand>
</feature>
<feature type="binding site" evidence="1">
    <location>
        <begin position="83"/>
        <end position="86"/>
    </location>
    <ligand>
        <name>GTP</name>
        <dbReference type="ChEBI" id="CHEBI:37565"/>
    </ligand>
</feature>
<feature type="binding site" evidence="1">
    <location>
        <begin position="150"/>
        <end position="153"/>
    </location>
    <ligand>
        <name>GTP</name>
        <dbReference type="ChEBI" id="CHEBI:37565"/>
    </ligand>
</feature>
<feature type="binding site" evidence="1">
    <location>
        <begin position="183"/>
        <end position="185"/>
    </location>
    <ligand>
        <name>GTP</name>
        <dbReference type="ChEBI" id="CHEBI:37565"/>
    </ligand>
</feature>
<organism>
    <name type="scientific">Shewanella pealeana (strain ATCC 700345 / ANG-SQ1)</name>
    <dbReference type="NCBI Taxonomy" id="398579"/>
    <lineage>
        <taxon>Bacteria</taxon>
        <taxon>Pseudomonadati</taxon>
        <taxon>Pseudomonadota</taxon>
        <taxon>Gammaproteobacteria</taxon>
        <taxon>Alteromonadales</taxon>
        <taxon>Shewanellaceae</taxon>
        <taxon>Shewanella</taxon>
    </lineage>
</organism>
<evidence type="ECO:0000255" key="1">
    <source>
        <dbReference type="HAMAP-Rule" id="MF_00321"/>
    </source>
</evidence>
<protein>
    <recommendedName>
        <fullName evidence="1">Probable GTP-binding protein EngB</fullName>
    </recommendedName>
</protein>
<gene>
    <name evidence="1" type="primary">engB</name>
    <name type="ordered locus">Spea_0101</name>
</gene>
<sequence length="225" mass="25101">MSESHIDFRKAEFLISAPDIAHLNEYLPGDVGVEIAFAGRSNAGKSSALNLLTEQKIARTSKTPGRTQLINVFRLDKHRRLVDLPGYGFAQVPLALKLKWQESLGEYLLKRDCLSGVVVLMDIRHPLKDLDMQMIEWAVESHIPVLALLTKADKLGQSARMKMVNEVRKKLSHFEDGVKVEPFSSLKGIGKGKVLGILDSWCKPEWLMQQLEADAIAAQAEADKD</sequence>
<comment type="function">
    <text evidence="1">Necessary for normal cell division and for the maintenance of normal septation.</text>
</comment>
<comment type="cofactor">
    <cofactor evidence="1">
        <name>Mg(2+)</name>
        <dbReference type="ChEBI" id="CHEBI:18420"/>
    </cofactor>
</comment>
<comment type="similarity">
    <text evidence="1">Belongs to the TRAFAC class TrmE-Era-EngA-EngB-Septin-like GTPase superfamily. EngB GTPase family.</text>
</comment>